<accession>P0DJF9</accession>
<accession>P74469</accession>
<dbReference type="EC" id="2.4.2.28" evidence="1"/>
<dbReference type="EMBL" id="AP012205">
    <property type="protein sequence ID" value="BAK50746.1"/>
    <property type="molecule type" value="Genomic_DNA"/>
</dbReference>
<dbReference type="SMR" id="P0DJF9"/>
<dbReference type="KEGG" id="syy:SYNGTS_1998"/>
<dbReference type="PATRIC" id="fig|1148.106.peg.2221"/>
<dbReference type="UniPathway" id="UPA00904">
    <property type="reaction ID" value="UER00873"/>
</dbReference>
<dbReference type="GO" id="GO:0005829">
    <property type="term" value="C:cytosol"/>
    <property type="evidence" value="ECO:0007669"/>
    <property type="project" value="TreeGrafter"/>
</dbReference>
<dbReference type="GO" id="GO:0017061">
    <property type="term" value="F:S-methyl-5-thioadenosine phosphorylase activity"/>
    <property type="evidence" value="ECO:0007669"/>
    <property type="project" value="UniProtKB-UniRule"/>
</dbReference>
<dbReference type="GO" id="GO:0019509">
    <property type="term" value="P:L-methionine salvage from methylthioadenosine"/>
    <property type="evidence" value="ECO:0007669"/>
    <property type="project" value="UniProtKB-UniRule"/>
</dbReference>
<dbReference type="GO" id="GO:0006166">
    <property type="term" value="P:purine ribonucleoside salvage"/>
    <property type="evidence" value="ECO:0007669"/>
    <property type="project" value="UniProtKB-KW"/>
</dbReference>
<dbReference type="CDD" id="cd09010">
    <property type="entry name" value="MTAP_SsMTAPII_like_MTIP"/>
    <property type="match status" value="1"/>
</dbReference>
<dbReference type="FunFam" id="3.40.50.1580:FF:000008">
    <property type="entry name" value="S-methyl-5'-thioadenosine phosphorylase"/>
    <property type="match status" value="1"/>
</dbReference>
<dbReference type="Gene3D" id="3.40.50.1580">
    <property type="entry name" value="Nucleoside phosphorylase domain"/>
    <property type="match status" value="1"/>
</dbReference>
<dbReference type="HAMAP" id="MF_01963">
    <property type="entry name" value="MTAP"/>
    <property type="match status" value="1"/>
</dbReference>
<dbReference type="InterPro" id="IPR010044">
    <property type="entry name" value="MTAP"/>
</dbReference>
<dbReference type="InterPro" id="IPR000845">
    <property type="entry name" value="Nucleoside_phosphorylase_d"/>
</dbReference>
<dbReference type="InterPro" id="IPR035994">
    <property type="entry name" value="Nucleoside_phosphorylase_sf"/>
</dbReference>
<dbReference type="NCBIfam" id="TIGR01694">
    <property type="entry name" value="MTAP"/>
    <property type="match status" value="1"/>
</dbReference>
<dbReference type="NCBIfam" id="NF005657">
    <property type="entry name" value="PRK07432.1"/>
    <property type="match status" value="1"/>
</dbReference>
<dbReference type="PANTHER" id="PTHR42679">
    <property type="entry name" value="S-METHYL-5'-THIOADENOSINE PHOSPHORYLASE"/>
    <property type="match status" value="1"/>
</dbReference>
<dbReference type="PANTHER" id="PTHR42679:SF2">
    <property type="entry name" value="S-METHYL-5'-THIOADENOSINE PHOSPHORYLASE"/>
    <property type="match status" value="1"/>
</dbReference>
<dbReference type="Pfam" id="PF01048">
    <property type="entry name" value="PNP_UDP_1"/>
    <property type="match status" value="1"/>
</dbReference>
<dbReference type="SUPFAM" id="SSF53167">
    <property type="entry name" value="Purine and uridine phosphorylases"/>
    <property type="match status" value="1"/>
</dbReference>
<evidence type="ECO:0000255" key="1">
    <source>
        <dbReference type="HAMAP-Rule" id="MF_01963"/>
    </source>
</evidence>
<comment type="function">
    <text evidence="1">Catalyzes the reversible phosphorylation of S-methyl-5'-thioadenosine (MTA) to adenine and 5-methylthioribose-1-phosphate. Involved in the breakdown of MTA, a major by-product of polyamine biosynthesis. Responsible for the first step in the methionine salvage pathway after MTA has been generated from S-adenosylmethionine. Has broad substrate specificity with 6-aminopurine nucleosides as preferred substrates.</text>
</comment>
<comment type="catalytic activity">
    <reaction evidence="1">
        <text>S-methyl-5'-thioadenosine + phosphate = 5-(methylsulfanyl)-alpha-D-ribose 1-phosphate + adenine</text>
        <dbReference type="Rhea" id="RHEA:11852"/>
        <dbReference type="ChEBI" id="CHEBI:16708"/>
        <dbReference type="ChEBI" id="CHEBI:17509"/>
        <dbReference type="ChEBI" id="CHEBI:43474"/>
        <dbReference type="ChEBI" id="CHEBI:58533"/>
        <dbReference type="EC" id="2.4.2.28"/>
    </reaction>
</comment>
<comment type="pathway">
    <text evidence="1">Amino-acid biosynthesis; L-methionine biosynthesis via salvage pathway; S-methyl-5-thio-alpha-D-ribose 1-phosphate from S-methyl-5'-thioadenosine (phosphorylase route): step 1/1.</text>
</comment>
<comment type="subunit">
    <text evidence="1">Homohexamer. Dimer of a homotrimer.</text>
</comment>
<comment type="similarity">
    <text evidence="1">Belongs to the PNP/MTAP phosphorylase family. MTAP subfamily.</text>
</comment>
<proteinExistence type="inferred from homology"/>
<organism>
    <name type="scientific">Synechocystis sp. (strain PCC 6803 / GT-S)</name>
    <dbReference type="NCBI Taxonomy" id="1111707"/>
    <lineage>
        <taxon>Bacteria</taxon>
        <taxon>Bacillati</taxon>
        <taxon>Cyanobacteriota</taxon>
        <taxon>Cyanophyceae</taxon>
        <taxon>Synechococcales</taxon>
        <taxon>Merismopediaceae</taxon>
        <taxon>Synechocystis</taxon>
    </lineage>
</organism>
<gene>
    <name evidence="1" type="primary">mtnP</name>
    <name type="ordered locus">SYNGTS_1998</name>
</gene>
<reference key="1">
    <citation type="journal article" date="2011" name="DNA Res.">
        <title>Genomic structure of the cyanobacterium Synechocystis sp. PCC 6803 strain GT-S.</title>
        <authorList>
            <person name="Tajima N."/>
            <person name="Sato S."/>
            <person name="Maruyama F."/>
            <person name="Kaneko T."/>
            <person name="Sasaki N.V."/>
            <person name="Kurokawa K."/>
            <person name="Ohta H."/>
            <person name="Kanesaki Y."/>
            <person name="Yoshikawa H."/>
            <person name="Tabata S."/>
            <person name="Ikeuchi M."/>
            <person name="Sato N."/>
        </authorList>
    </citation>
    <scope>NUCLEOTIDE SEQUENCE [LARGE SCALE GENOMIC DNA]</scope>
    <source>
        <strain>PCC 6803 / GT-S</strain>
    </source>
</reference>
<keyword id="KW-0328">Glycosyltransferase</keyword>
<keyword id="KW-0660">Purine salvage</keyword>
<keyword id="KW-0808">Transferase</keyword>
<name>MTAP_SYNYG</name>
<sequence length="326" mass="35319">MGMIISMAMTAVTIWTKTKPGRVSCFIRKNSTMVNAPIGIIGGSGLYQMEALKNVEEVTLDTPFGAPSDSFIVGELAGVRVAFLARHGRGHHLLPSEIPFRANIHGMKQLGVKYLISASAVGSLQAEAKPLDMVVPDQFIDRTRQRISTFFGEGIVAHIGFGNPICPQLAQCLSTAIAGLELEGVTLHDRGTYVSMEGPAFSTIAESNLYRSWGGTVIGMTNLPEAKLAREAEIAYATLALVTDYDCWHPDHDHVTVEMVIGNLQKNAVNAQQVILETVKQLAANPFESIAHRALQYAVLTPPDKFPAATYEKLSLLLGKYYPPAP</sequence>
<feature type="chain" id="PRO_0000416437" description="S-methyl-5'-thioadenosine phosphorylase">
    <location>
        <begin position="1"/>
        <end position="326"/>
    </location>
</feature>
<feature type="binding site" evidence="1">
    <location>
        <position position="44"/>
    </location>
    <ligand>
        <name>phosphate</name>
        <dbReference type="ChEBI" id="CHEBI:43474"/>
    </ligand>
</feature>
<feature type="binding site" evidence="1">
    <location>
        <begin position="86"/>
        <end position="87"/>
    </location>
    <ligand>
        <name>phosphate</name>
        <dbReference type="ChEBI" id="CHEBI:43474"/>
    </ligand>
</feature>
<feature type="binding site" evidence="1">
    <location>
        <begin position="119"/>
        <end position="120"/>
    </location>
    <ligand>
        <name>phosphate</name>
        <dbReference type="ChEBI" id="CHEBI:43474"/>
    </ligand>
</feature>
<feature type="binding site" evidence="1">
    <location>
        <position position="220"/>
    </location>
    <ligand>
        <name>substrate</name>
    </ligand>
</feature>
<feature type="binding site" evidence="1">
    <location>
        <position position="221"/>
    </location>
    <ligand>
        <name>phosphate</name>
        <dbReference type="ChEBI" id="CHEBI:43474"/>
    </ligand>
</feature>
<feature type="binding site" evidence="1">
    <location>
        <begin position="244"/>
        <end position="246"/>
    </location>
    <ligand>
        <name>substrate</name>
    </ligand>
</feature>
<feature type="site" description="Important for substrate specificity" evidence="1">
    <location>
        <position position="202"/>
    </location>
</feature>
<feature type="site" description="Important for substrate specificity" evidence="1">
    <location>
        <position position="257"/>
    </location>
</feature>
<protein>
    <recommendedName>
        <fullName evidence="1">S-methyl-5'-thioadenosine phosphorylase</fullName>
        <ecNumber evidence="1">2.4.2.28</ecNumber>
    </recommendedName>
    <alternativeName>
        <fullName evidence="1">5'-methylthioadenosine phosphorylase</fullName>
        <shortName evidence="1">MTA phosphorylase</shortName>
        <shortName evidence="1">MTAP</shortName>
    </alternativeName>
</protein>